<gene>
    <name type="primary">alr</name>
    <name type="ordered locus">VSAL_I0383</name>
</gene>
<evidence type="ECO:0000255" key="1">
    <source>
        <dbReference type="HAMAP-Rule" id="MF_01201"/>
    </source>
</evidence>
<accession>B6ELK6</accession>
<keyword id="KW-0413">Isomerase</keyword>
<keyword id="KW-0663">Pyridoxal phosphate</keyword>
<protein>
    <recommendedName>
        <fullName evidence="1">Alanine racemase</fullName>
        <ecNumber evidence="1">5.1.1.1</ecNumber>
    </recommendedName>
</protein>
<dbReference type="EC" id="5.1.1.1" evidence="1"/>
<dbReference type="EMBL" id="FM178379">
    <property type="protein sequence ID" value="CAQ78068.1"/>
    <property type="molecule type" value="Genomic_DNA"/>
</dbReference>
<dbReference type="SMR" id="B6ELK6"/>
<dbReference type="KEGG" id="vsa:VSAL_I0383"/>
<dbReference type="eggNOG" id="COG0787">
    <property type="taxonomic scope" value="Bacteria"/>
</dbReference>
<dbReference type="HOGENOM" id="CLU_028393_1_0_6"/>
<dbReference type="UniPathway" id="UPA00042">
    <property type="reaction ID" value="UER00497"/>
</dbReference>
<dbReference type="Proteomes" id="UP000001730">
    <property type="component" value="Chromosome 1"/>
</dbReference>
<dbReference type="GO" id="GO:0005829">
    <property type="term" value="C:cytosol"/>
    <property type="evidence" value="ECO:0007669"/>
    <property type="project" value="TreeGrafter"/>
</dbReference>
<dbReference type="GO" id="GO:0008784">
    <property type="term" value="F:alanine racemase activity"/>
    <property type="evidence" value="ECO:0007669"/>
    <property type="project" value="UniProtKB-UniRule"/>
</dbReference>
<dbReference type="GO" id="GO:0030170">
    <property type="term" value="F:pyridoxal phosphate binding"/>
    <property type="evidence" value="ECO:0007669"/>
    <property type="project" value="UniProtKB-UniRule"/>
</dbReference>
<dbReference type="GO" id="GO:0030632">
    <property type="term" value="P:D-alanine biosynthetic process"/>
    <property type="evidence" value="ECO:0007669"/>
    <property type="project" value="UniProtKB-UniRule"/>
</dbReference>
<dbReference type="CDD" id="cd06827">
    <property type="entry name" value="PLPDE_III_AR_proteobact"/>
    <property type="match status" value="1"/>
</dbReference>
<dbReference type="FunFam" id="2.40.37.10:FF:000002">
    <property type="entry name" value="Alanine racemase"/>
    <property type="match status" value="1"/>
</dbReference>
<dbReference type="FunFam" id="3.20.20.10:FF:000002">
    <property type="entry name" value="Alanine racemase"/>
    <property type="match status" value="1"/>
</dbReference>
<dbReference type="Gene3D" id="3.20.20.10">
    <property type="entry name" value="Alanine racemase"/>
    <property type="match status" value="1"/>
</dbReference>
<dbReference type="Gene3D" id="2.40.37.10">
    <property type="entry name" value="Lyase, Ornithine Decarboxylase, Chain A, domain 1"/>
    <property type="match status" value="1"/>
</dbReference>
<dbReference type="HAMAP" id="MF_01201">
    <property type="entry name" value="Ala_racemase"/>
    <property type="match status" value="1"/>
</dbReference>
<dbReference type="InterPro" id="IPR000821">
    <property type="entry name" value="Ala_racemase"/>
</dbReference>
<dbReference type="InterPro" id="IPR009006">
    <property type="entry name" value="Ala_racemase/Decarboxylase_C"/>
</dbReference>
<dbReference type="InterPro" id="IPR011079">
    <property type="entry name" value="Ala_racemase_C"/>
</dbReference>
<dbReference type="InterPro" id="IPR001608">
    <property type="entry name" value="Ala_racemase_N"/>
</dbReference>
<dbReference type="InterPro" id="IPR020622">
    <property type="entry name" value="Ala_racemase_pyridoxalP-BS"/>
</dbReference>
<dbReference type="InterPro" id="IPR029066">
    <property type="entry name" value="PLP-binding_barrel"/>
</dbReference>
<dbReference type="NCBIfam" id="TIGR00492">
    <property type="entry name" value="alr"/>
    <property type="match status" value="1"/>
</dbReference>
<dbReference type="PANTHER" id="PTHR30511">
    <property type="entry name" value="ALANINE RACEMASE"/>
    <property type="match status" value="1"/>
</dbReference>
<dbReference type="PANTHER" id="PTHR30511:SF4">
    <property type="entry name" value="ALANINE RACEMASE, BIOSYNTHETIC"/>
    <property type="match status" value="1"/>
</dbReference>
<dbReference type="Pfam" id="PF00842">
    <property type="entry name" value="Ala_racemase_C"/>
    <property type="match status" value="1"/>
</dbReference>
<dbReference type="Pfam" id="PF01168">
    <property type="entry name" value="Ala_racemase_N"/>
    <property type="match status" value="1"/>
</dbReference>
<dbReference type="PRINTS" id="PR00992">
    <property type="entry name" value="ALARACEMASE"/>
</dbReference>
<dbReference type="SMART" id="SM01005">
    <property type="entry name" value="Ala_racemase_C"/>
    <property type="match status" value="1"/>
</dbReference>
<dbReference type="SUPFAM" id="SSF50621">
    <property type="entry name" value="Alanine racemase C-terminal domain-like"/>
    <property type="match status" value="1"/>
</dbReference>
<dbReference type="SUPFAM" id="SSF51419">
    <property type="entry name" value="PLP-binding barrel"/>
    <property type="match status" value="1"/>
</dbReference>
<dbReference type="PROSITE" id="PS00395">
    <property type="entry name" value="ALANINE_RACEMASE"/>
    <property type="match status" value="1"/>
</dbReference>
<name>ALR_ALISL</name>
<reference key="1">
    <citation type="journal article" date="2008" name="BMC Genomics">
        <title>The genome sequence of the fish pathogen Aliivibrio salmonicida strain LFI1238 shows extensive evidence of gene decay.</title>
        <authorList>
            <person name="Hjerde E."/>
            <person name="Lorentzen M.S."/>
            <person name="Holden M.T."/>
            <person name="Seeger K."/>
            <person name="Paulsen S."/>
            <person name="Bason N."/>
            <person name="Churcher C."/>
            <person name="Harris D."/>
            <person name="Norbertczak H."/>
            <person name="Quail M.A."/>
            <person name="Sanders S."/>
            <person name="Thurston S."/>
            <person name="Parkhill J."/>
            <person name="Willassen N.P."/>
            <person name="Thomson N.R."/>
        </authorList>
    </citation>
    <scope>NUCLEOTIDE SEQUENCE [LARGE SCALE GENOMIC DNA]</scope>
    <source>
        <strain>LFI1238</strain>
    </source>
</reference>
<feature type="chain" id="PRO_1000213829" description="Alanine racemase">
    <location>
        <begin position="1"/>
        <end position="358"/>
    </location>
</feature>
<feature type="active site" description="Proton acceptor; specific for D-alanine" evidence="1">
    <location>
        <position position="34"/>
    </location>
</feature>
<feature type="active site" description="Proton acceptor; specific for L-alanine" evidence="1">
    <location>
        <position position="254"/>
    </location>
</feature>
<feature type="binding site" evidence="1">
    <location>
        <position position="129"/>
    </location>
    <ligand>
        <name>substrate</name>
    </ligand>
</feature>
<feature type="binding site" evidence="1">
    <location>
        <position position="302"/>
    </location>
    <ligand>
        <name>substrate</name>
    </ligand>
</feature>
<feature type="modified residue" description="N6-(pyridoxal phosphate)lysine" evidence="1">
    <location>
        <position position="34"/>
    </location>
</feature>
<sequence>MTAAAAQIDMSALAHNLQKIKQQAPNSKLLAVVKANGYGHGLLNIAKGAHGVDAFGVARIEEALQLRAGGIVKQVLLLEGFYSAGDLPILVANNIQTAVHCKEQLEALENADLEGPVVVWLKVDSGMHRLGIRPEEYQEYVDRLHACKNVAQPLRYMSHFGCADELDNPTTNEQIETFMSLTDGCQGERSLAASAGLLAWPDSQLDWVRPGIIMYGVSPFSEKTAQDLGYLPTMTLTSHLIAVREVKAGESVGYGAMWTSERDTKIGVIAIGYGDGYPIAAPNGTPVLVNGRKVPVAGRVSMDMLTVDLGPDAEDNVGDEAILWGRDLPAEEVAEHIGTIAYELVTKLTSRVQMQYIP</sequence>
<proteinExistence type="inferred from homology"/>
<comment type="function">
    <text evidence="1">Catalyzes the interconversion of L-alanine and D-alanine. May also act on other amino acids.</text>
</comment>
<comment type="catalytic activity">
    <reaction evidence="1">
        <text>L-alanine = D-alanine</text>
        <dbReference type="Rhea" id="RHEA:20249"/>
        <dbReference type="ChEBI" id="CHEBI:57416"/>
        <dbReference type="ChEBI" id="CHEBI:57972"/>
        <dbReference type="EC" id="5.1.1.1"/>
    </reaction>
</comment>
<comment type="cofactor">
    <cofactor evidence="1">
        <name>pyridoxal 5'-phosphate</name>
        <dbReference type="ChEBI" id="CHEBI:597326"/>
    </cofactor>
</comment>
<comment type="pathway">
    <text evidence="1">Amino-acid biosynthesis; D-alanine biosynthesis; D-alanine from L-alanine: step 1/1.</text>
</comment>
<comment type="similarity">
    <text evidence="1">Belongs to the alanine racemase family.</text>
</comment>
<organism>
    <name type="scientific">Aliivibrio salmonicida (strain LFI1238)</name>
    <name type="common">Vibrio salmonicida (strain LFI1238)</name>
    <dbReference type="NCBI Taxonomy" id="316275"/>
    <lineage>
        <taxon>Bacteria</taxon>
        <taxon>Pseudomonadati</taxon>
        <taxon>Pseudomonadota</taxon>
        <taxon>Gammaproteobacteria</taxon>
        <taxon>Vibrionales</taxon>
        <taxon>Vibrionaceae</taxon>
        <taxon>Aliivibrio</taxon>
    </lineage>
</organism>